<comment type="function">
    <text evidence="1">Catalyzes the addition and repair of the essential 3'-terminal CCA sequence in tRNAs without using a nucleic acid template. Adds these three nucleotides in the order of C, C, and A to the tRNA nucleotide-73, using CTP and ATP as substrates and producing inorganic pyrophosphate. tRNA 3'-terminal CCA addition is required both for tRNA processing and repair. Also involved in tRNA surveillance by mediating tandem CCA addition to generate a CCACCA at the 3' terminus of unstable tRNAs. While stable tRNAs receive only 3'-terminal CCA, unstable tRNAs are marked with CCACCA and rapidly degraded.</text>
</comment>
<comment type="catalytic activity">
    <reaction evidence="1">
        <text>a tRNA precursor + 2 CTP + ATP = a tRNA with a 3' CCA end + 3 diphosphate</text>
        <dbReference type="Rhea" id="RHEA:14433"/>
        <dbReference type="Rhea" id="RHEA-COMP:10465"/>
        <dbReference type="Rhea" id="RHEA-COMP:10468"/>
        <dbReference type="ChEBI" id="CHEBI:30616"/>
        <dbReference type="ChEBI" id="CHEBI:33019"/>
        <dbReference type="ChEBI" id="CHEBI:37563"/>
        <dbReference type="ChEBI" id="CHEBI:74896"/>
        <dbReference type="ChEBI" id="CHEBI:83071"/>
        <dbReference type="EC" id="2.7.7.72"/>
    </reaction>
</comment>
<comment type="catalytic activity">
    <reaction evidence="1">
        <text>a tRNA with a 3' CCA end + 2 CTP + ATP = a tRNA with a 3' CCACCA end + 3 diphosphate</text>
        <dbReference type="Rhea" id="RHEA:76235"/>
        <dbReference type="Rhea" id="RHEA-COMP:10468"/>
        <dbReference type="Rhea" id="RHEA-COMP:18655"/>
        <dbReference type="ChEBI" id="CHEBI:30616"/>
        <dbReference type="ChEBI" id="CHEBI:33019"/>
        <dbReference type="ChEBI" id="CHEBI:37563"/>
        <dbReference type="ChEBI" id="CHEBI:83071"/>
        <dbReference type="ChEBI" id="CHEBI:195187"/>
    </reaction>
    <physiologicalReaction direction="left-to-right" evidence="1">
        <dbReference type="Rhea" id="RHEA:76236"/>
    </physiologicalReaction>
</comment>
<comment type="cofactor">
    <cofactor evidence="1">
        <name>Mg(2+)</name>
        <dbReference type="ChEBI" id="CHEBI:18420"/>
    </cofactor>
    <text evidence="1">Magnesium is required for nucleotidyltransferase activity.</text>
</comment>
<comment type="cofactor">
    <cofactor evidence="1">
        <name>Ni(2+)</name>
        <dbReference type="ChEBI" id="CHEBI:49786"/>
    </cofactor>
    <text evidence="1">Nickel for phosphatase activity.</text>
</comment>
<comment type="subunit">
    <text evidence="1">Monomer. Can also form homodimers and oligomers.</text>
</comment>
<comment type="domain">
    <text evidence="1">Comprises two domains: an N-terminal domain containing the nucleotidyltransferase activity and a C-terminal HD domain associated with both phosphodiesterase and phosphatase activities.</text>
</comment>
<comment type="miscellaneous">
    <text evidence="1">A single active site specifically recognizes both ATP and CTP and is responsible for their addition.</text>
</comment>
<comment type="similarity">
    <text evidence="1">Belongs to the tRNA nucleotidyltransferase/poly(A) polymerase family. Bacterial CCA-adding enzyme type 1 subfamily.</text>
</comment>
<sequence>MQIYKVGGAVRDRLLGQPVTDIDWVVVGASTEDMLIKGYRPVGTDFPVFLHPLTNEEYALARTERKSGVGYGGFVFHASPEVTLEQDLIRRDLTINAMAEDKDGNLTDPYNGQKDLQARILRHVSPAFAEDPLRVLRVARFAARYAGYGFTIAPETLGLMRQLSASGELKALTAERSWKEISRALMEEQPQVFIQVLHDCGALKELMPEVEALFGVPQPAAHHPEIDTGVHVLSVLEQSARHKHPLTVRWACLLHDLGKGLTPEAEWPRHIAHEHTGLRLIKAVNERFRVPRDCQELALLVGQYHTHGHRALELKPSTLLELLQSFDVYRRPQRFEEFIAACEMDARGRHGFEQRSYPQADYLRGAAEAARAVSVQPLLEQGLKGKELGDALKNERLKALKTYKTSTV</sequence>
<gene>
    <name evidence="1" type="primary">cca</name>
    <name type="ordered locus">Psyr_4634</name>
</gene>
<organism>
    <name type="scientific">Pseudomonas syringae pv. syringae (strain B728a)</name>
    <dbReference type="NCBI Taxonomy" id="205918"/>
    <lineage>
        <taxon>Bacteria</taxon>
        <taxon>Pseudomonadati</taxon>
        <taxon>Pseudomonadota</taxon>
        <taxon>Gammaproteobacteria</taxon>
        <taxon>Pseudomonadales</taxon>
        <taxon>Pseudomonadaceae</taxon>
        <taxon>Pseudomonas</taxon>
        <taxon>Pseudomonas syringae</taxon>
    </lineage>
</organism>
<protein>
    <recommendedName>
        <fullName evidence="1">Multifunctional CCA protein</fullName>
    </recommendedName>
    <domain>
        <recommendedName>
            <fullName evidence="1">CCA-adding enzyme</fullName>
            <ecNumber evidence="1">2.7.7.72</ecNumber>
        </recommendedName>
        <alternativeName>
            <fullName evidence="1">CCA tRNA nucleotidyltransferase</fullName>
        </alternativeName>
        <alternativeName>
            <fullName evidence="1">tRNA CCA-pyrophosphorylase</fullName>
        </alternativeName>
        <alternativeName>
            <fullName evidence="1">tRNA adenylyl-/cytidylyl-transferase</fullName>
        </alternativeName>
        <alternativeName>
            <fullName evidence="1">tRNA nucleotidyltransferase</fullName>
        </alternativeName>
        <alternativeName>
            <fullName evidence="1">tRNA-NT</fullName>
        </alternativeName>
    </domain>
    <domain>
        <recommendedName>
            <fullName evidence="1">2'-nucleotidase</fullName>
            <ecNumber evidence="1">3.1.3.-</ecNumber>
        </recommendedName>
    </domain>
    <domain>
        <recommendedName>
            <fullName evidence="1">2',3'-cyclic phosphodiesterase</fullName>
            <ecNumber evidence="1">3.1.4.-</ecNumber>
        </recommendedName>
    </domain>
    <domain>
        <recommendedName>
            <fullName evidence="1">Phosphatase</fullName>
            <ecNumber evidence="1">3.1.3.-</ecNumber>
        </recommendedName>
    </domain>
</protein>
<keyword id="KW-0067">ATP-binding</keyword>
<keyword id="KW-0378">Hydrolase</keyword>
<keyword id="KW-0460">Magnesium</keyword>
<keyword id="KW-0479">Metal-binding</keyword>
<keyword id="KW-0511">Multifunctional enzyme</keyword>
<keyword id="KW-0533">Nickel</keyword>
<keyword id="KW-0547">Nucleotide-binding</keyword>
<keyword id="KW-0548">Nucleotidyltransferase</keyword>
<keyword id="KW-0692">RNA repair</keyword>
<keyword id="KW-0694">RNA-binding</keyword>
<keyword id="KW-0808">Transferase</keyword>
<keyword id="KW-0819">tRNA processing</keyword>
<proteinExistence type="inferred from homology"/>
<evidence type="ECO:0000255" key="1">
    <source>
        <dbReference type="HAMAP-Rule" id="MF_01261"/>
    </source>
</evidence>
<reference key="1">
    <citation type="journal article" date="2005" name="Proc. Natl. Acad. Sci. U.S.A.">
        <title>Comparison of the complete genome sequences of Pseudomonas syringae pv. syringae B728a and pv. tomato DC3000.</title>
        <authorList>
            <person name="Feil H."/>
            <person name="Feil W.S."/>
            <person name="Chain P."/>
            <person name="Larimer F."/>
            <person name="Dibartolo G."/>
            <person name="Copeland A."/>
            <person name="Lykidis A."/>
            <person name="Trong S."/>
            <person name="Nolan M."/>
            <person name="Goltsman E."/>
            <person name="Thiel J."/>
            <person name="Malfatti S."/>
            <person name="Loper J.E."/>
            <person name="Lapidus A."/>
            <person name="Detter J.C."/>
            <person name="Land M."/>
            <person name="Richardson P.M."/>
            <person name="Kyrpides N.C."/>
            <person name="Ivanova N."/>
            <person name="Lindow S.E."/>
        </authorList>
    </citation>
    <scope>NUCLEOTIDE SEQUENCE [LARGE SCALE GENOMIC DNA]</scope>
    <source>
        <strain>B728a</strain>
    </source>
</reference>
<feature type="chain" id="PRO_1000054286" description="Multifunctional CCA protein">
    <location>
        <begin position="1"/>
        <end position="408"/>
    </location>
</feature>
<feature type="domain" description="HD" evidence="1">
    <location>
        <begin position="228"/>
        <end position="329"/>
    </location>
</feature>
<feature type="binding site" evidence="1">
    <location>
        <position position="8"/>
    </location>
    <ligand>
        <name>ATP</name>
        <dbReference type="ChEBI" id="CHEBI:30616"/>
    </ligand>
</feature>
<feature type="binding site" evidence="1">
    <location>
        <position position="8"/>
    </location>
    <ligand>
        <name>CTP</name>
        <dbReference type="ChEBI" id="CHEBI:37563"/>
    </ligand>
</feature>
<feature type="binding site" evidence="1">
    <location>
        <position position="11"/>
    </location>
    <ligand>
        <name>ATP</name>
        <dbReference type="ChEBI" id="CHEBI:30616"/>
    </ligand>
</feature>
<feature type="binding site" evidence="1">
    <location>
        <position position="11"/>
    </location>
    <ligand>
        <name>CTP</name>
        <dbReference type="ChEBI" id="CHEBI:37563"/>
    </ligand>
</feature>
<feature type="binding site" evidence="1">
    <location>
        <position position="21"/>
    </location>
    <ligand>
        <name>Mg(2+)</name>
        <dbReference type="ChEBI" id="CHEBI:18420"/>
    </ligand>
</feature>
<feature type="binding site" evidence="1">
    <location>
        <position position="23"/>
    </location>
    <ligand>
        <name>Mg(2+)</name>
        <dbReference type="ChEBI" id="CHEBI:18420"/>
    </ligand>
</feature>
<feature type="binding site" evidence="1">
    <location>
        <position position="91"/>
    </location>
    <ligand>
        <name>ATP</name>
        <dbReference type="ChEBI" id="CHEBI:30616"/>
    </ligand>
</feature>
<feature type="binding site" evidence="1">
    <location>
        <position position="91"/>
    </location>
    <ligand>
        <name>CTP</name>
        <dbReference type="ChEBI" id="CHEBI:37563"/>
    </ligand>
</feature>
<feature type="binding site" evidence="1">
    <location>
        <position position="137"/>
    </location>
    <ligand>
        <name>ATP</name>
        <dbReference type="ChEBI" id="CHEBI:30616"/>
    </ligand>
</feature>
<feature type="binding site" evidence="1">
    <location>
        <position position="137"/>
    </location>
    <ligand>
        <name>CTP</name>
        <dbReference type="ChEBI" id="CHEBI:37563"/>
    </ligand>
</feature>
<feature type="binding site" evidence="1">
    <location>
        <position position="140"/>
    </location>
    <ligand>
        <name>ATP</name>
        <dbReference type="ChEBI" id="CHEBI:30616"/>
    </ligand>
</feature>
<feature type="binding site" evidence="1">
    <location>
        <position position="140"/>
    </location>
    <ligand>
        <name>CTP</name>
        <dbReference type="ChEBI" id="CHEBI:37563"/>
    </ligand>
</feature>
<dbReference type="EC" id="2.7.7.72" evidence="1"/>
<dbReference type="EC" id="3.1.3.-" evidence="1"/>
<dbReference type="EC" id="3.1.4.-" evidence="1"/>
<dbReference type="EMBL" id="CP000075">
    <property type="protein sequence ID" value="AAY39664.1"/>
    <property type="molecule type" value="Genomic_DNA"/>
</dbReference>
<dbReference type="RefSeq" id="WP_011269138.1">
    <property type="nucleotide sequence ID" value="NC_007005.1"/>
</dbReference>
<dbReference type="RefSeq" id="YP_237702.1">
    <property type="nucleotide sequence ID" value="NC_007005.1"/>
</dbReference>
<dbReference type="SMR" id="Q4ZMF8"/>
<dbReference type="STRING" id="205918.Psyr_4634"/>
<dbReference type="KEGG" id="psb:Psyr_4634"/>
<dbReference type="PATRIC" id="fig|205918.7.peg.4779"/>
<dbReference type="eggNOG" id="COG0617">
    <property type="taxonomic scope" value="Bacteria"/>
</dbReference>
<dbReference type="HOGENOM" id="CLU_015961_1_1_6"/>
<dbReference type="OrthoDB" id="9805698at2"/>
<dbReference type="Proteomes" id="UP000000426">
    <property type="component" value="Chromosome"/>
</dbReference>
<dbReference type="GO" id="GO:0005524">
    <property type="term" value="F:ATP binding"/>
    <property type="evidence" value="ECO:0007669"/>
    <property type="project" value="UniProtKB-UniRule"/>
</dbReference>
<dbReference type="GO" id="GO:0004810">
    <property type="term" value="F:CCA tRNA nucleotidyltransferase activity"/>
    <property type="evidence" value="ECO:0007669"/>
    <property type="project" value="UniProtKB-UniRule"/>
</dbReference>
<dbReference type="GO" id="GO:0004112">
    <property type="term" value="F:cyclic-nucleotide phosphodiesterase activity"/>
    <property type="evidence" value="ECO:0007669"/>
    <property type="project" value="UniProtKB-UniRule"/>
</dbReference>
<dbReference type="GO" id="GO:0000287">
    <property type="term" value="F:magnesium ion binding"/>
    <property type="evidence" value="ECO:0007669"/>
    <property type="project" value="UniProtKB-UniRule"/>
</dbReference>
<dbReference type="GO" id="GO:0016791">
    <property type="term" value="F:phosphatase activity"/>
    <property type="evidence" value="ECO:0007669"/>
    <property type="project" value="UniProtKB-UniRule"/>
</dbReference>
<dbReference type="GO" id="GO:0000049">
    <property type="term" value="F:tRNA binding"/>
    <property type="evidence" value="ECO:0007669"/>
    <property type="project" value="UniProtKB-UniRule"/>
</dbReference>
<dbReference type="GO" id="GO:0042245">
    <property type="term" value="P:RNA repair"/>
    <property type="evidence" value="ECO:0007669"/>
    <property type="project" value="UniProtKB-KW"/>
</dbReference>
<dbReference type="GO" id="GO:0001680">
    <property type="term" value="P:tRNA 3'-terminal CCA addition"/>
    <property type="evidence" value="ECO:0007669"/>
    <property type="project" value="UniProtKB-UniRule"/>
</dbReference>
<dbReference type="CDD" id="cd00077">
    <property type="entry name" value="HDc"/>
    <property type="match status" value="1"/>
</dbReference>
<dbReference type="CDD" id="cd05398">
    <property type="entry name" value="NT_ClassII-CCAase"/>
    <property type="match status" value="1"/>
</dbReference>
<dbReference type="FunFam" id="1.10.3090.10:FF:000001">
    <property type="entry name" value="Multifunctional CCA protein"/>
    <property type="match status" value="1"/>
</dbReference>
<dbReference type="FunFam" id="3.30.460.10:FF:000016">
    <property type="entry name" value="Multifunctional CCA protein"/>
    <property type="match status" value="1"/>
</dbReference>
<dbReference type="Gene3D" id="3.30.460.10">
    <property type="entry name" value="Beta Polymerase, domain 2"/>
    <property type="match status" value="1"/>
</dbReference>
<dbReference type="Gene3D" id="1.10.3090.10">
    <property type="entry name" value="cca-adding enzyme, domain 2"/>
    <property type="match status" value="1"/>
</dbReference>
<dbReference type="HAMAP" id="MF_01261">
    <property type="entry name" value="CCA_bact_type1"/>
    <property type="match status" value="1"/>
</dbReference>
<dbReference type="HAMAP" id="MF_01262">
    <property type="entry name" value="CCA_bact_type2"/>
    <property type="match status" value="1"/>
</dbReference>
<dbReference type="InterPro" id="IPR012006">
    <property type="entry name" value="CCA_bact"/>
</dbReference>
<dbReference type="InterPro" id="IPR003607">
    <property type="entry name" value="HD/PDEase_dom"/>
</dbReference>
<dbReference type="InterPro" id="IPR006674">
    <property type="entry name" value="HD_domain"/>
</dbReference>
<dbReference type="InterPro" id="IPR043519">
    <property type="entry name" value="NT_sf"/>
</dbReference>
<dbReference type="InterPro" id="IPR002646">
    <property type="entry name" value="PolA_pol_head_dom"/>
</dbReference>
<dbReference type="InterPro" id="IPR032828">
    <property type="entry name" value="PolyA_RNA-bd"/>
</dbReference>
<dbReference type="InterPro" id="IPR050124">
    <property type="entry name" value="tRNA_CCA-adding_enzyme"/>
</dbReference>
<dbReference type="NCBIfam" id="NF008137">
    <property type="entry name" value="PRK10885.1"/>
    <property type="match status" value="1"/>
</dbReference>
<dbReference type="PANTHER" id="PTHR47545">
    <property type="entry name" value="MULTIFUNCTIONAL CCA PROTEIN"/>
    <property type="match status" value="1"/>
</dbReference>
<dbReference type="PANTHER" id="PTHR47545:SF1">
    <property type="entry name" value="MULTIFUNCTIONAL CCA PROTEIN"/>
    <property type="match status" value="1"/>
</dbReference>
<dbReference type="Pfam" id="PF01966">
    <property type="entry name" value="HD"/>
    <property type="match status" value="1"/>
</dbReference>
<dbReference type="Pfam" id="PF01743">
    <property type="entry name" value="PolyA_pol"/>
    <property type="match status" value="1"/>
</dbReference>
<dbReference type="Pfam" id="PF12627">
    <property type="entry name" value="PolyA_pol_RNAbd"/>
    <property type="match status" value="1"/>
</dbReference>
<dbReference type="PIRSF" id="PIRSF000813">
    <property type="entry name" value="CCA_bact"/>
    <property type="match status" value="1"/>
</dbReference>
<dbReference type="SUPFAM" id="SSF81301">
    <property type="entry name" value="Nucleotidyltransferase"/>
    <property type="match status" value="1"/>
</dbReference>
<dbReference type="SUPFAM" id="SSF81891">
    <property type="entry name" value="Poly A polymerase C-terminal region-like"/>
    <property type="match status" value="1"/>
</dbReference>
<dbReference type="PROSITE" id="PS51831">
    <property type="entry name" value="HD"/>
    <property type="match status" value="1"/>
</dbReference>
<name>CCA_PSEU2</name>
<accession>Q4ZMF8</accession>